<comment type="function">
    <text>Transcriptional activator for the hut, put and ure operons and repressor for the gdh and gltB operons in response to nitrogen limitation. Negative regulator of its own expression.</text>
</comment>
<comment type="similarity">
    <text evidence="2">Belongs to the LysR transcriptional regulatory family.</text>
</comment>
<feature type="chain" id="PRO_0000105687" description="Nitrogen assimilation regulatory protein nac">
    <location>
        <begin position="1"/>
        <end position="305"/>
    </location>
</feature>
<feature type="domain" description="HTH lysR-type" evidence="1">
    <location>
        <begin position="1"/>
        <end position="58"/>
    </location>
</feature>
<feature type="DNA-binding region" description="H-T-H motif" evidence="1">
    <location>
        <begin position="18"/>
        <end position="37"/>
    </location>
</feature>
<dbReference type="EMBL" id="L01114">
    <property type="protein sequence ID" value="AAA18173.1"/>
    <property type="molecule type" value="Genomic_DNA"/>
</dbReference>
<dbReference type="SMR" id="Q08597"/>
<dbReference type="STRING" id="548.EAG7_00767"/>
<dbReference type="GO" id="GO:0003677">
    <property type="term" value="F:DNA binding"/>
    <property type="evidence" value="ECO:0007669"/>
    <property type="project" value="UniProtKB-KW"/>
</dbReference>
<dbReference type="GO" id="GO:0003700">
    <property type="term" value="F:DNA-binding transcription factor activity"/>
    <property type="evidence" value="ECO:0007669"/>
    <property type="project" value="InterPro"/>
</dbReference>
<dbReference type="GO" id="GO:0042128">
    <property type="term" value="P:nitrate assimilation"/>
    <property type="evidence" value="ECO:0007669"/>
    <property type="project" value="UniProtKB-KW"/>
</dbReference>
<dbReference type="GO" id="GO:2000142">
    <property type="term" value="P:regulation of DNA-templated transcription initiation"/>
    <property type="evidence" value="ECO:0007669"/>
    <property type="project" value="TreeGrafter"/>
</dbReference>
<dbReference type="CDD" id="cd08433">
    <property type="entry name" value="PBP2_Nac"/>
    <property type="match status" value="1"/>
</dbReference>
<dbReference type="FunFam" id="1.10.10.10:FF:000001">
    <property type="entry name" value="LysR family transcriptional regulator"/>
    <property type="match status" value="1"/>
</dbReference>
<dbReference type="Gene3D" id="3.40.190.290">
    <property type="match status" value="1"/>
</dbReference>
<dbReference type="Gene3D" id="1.10.10.10">
    <property type="entry name" value="Winged helix-like DNA-binding domain superfamily/Winged helix DNA-binding domain"/>
    <property type="match status" value="1"/>
</dbReference>
<dbReference type="InterPro" id="IPR005119">
    <property type="entry name" value="LysR_subst-bd"/>
</dbReference>
<dbReference type="InterPro" id="IPR000847">
    <property type="entry name" value="Tscrpt_reg_HTH_LysR"/>
</dbReference>
<dbReference type="InterPro" id="IPR036388">
    <property type="entry name" value="WH-like_DNA-bd_sf"/>
</dbReference>
<dbReference type="InterPro" id="IPR036390">
    <property type="entry name" value="WH_DNA-bd_sf"/>
</dbReference>
<dbReference type="NCBIfam" id="NF008410">
    <property type="entry name" value="PRK11233.1"/>
    <property type="match status" value="1"/>
</dbReference>
<dbReference type="PANTHER" id="PTHR30293:SF0">
    <property type="entry name" value="NITROGEN ASSIMILATION REGULATORY PROTEIN NAC"/>
    <property type="match status" value="1"/>
</dbReference>
<dbReference type="PANTHER" id="PTHR30293">
    <property type="entry name" value="TRANSCRIPTIONAL REGULATORY PROTEIN NAC-RELATED"/>
    <property type="match status" value="1"/>
</dbReference>
<dbReference type="Pfam" id="PF00126">
    <property type="entry name" value="HTH_1"/>
    <property type="match status" value="1"/>
</dbReference>
<dbReference type="Pfam" id="PF03466">
    <property type="entry name" value="LysR_substrate"/>
    <property type="match status" value="1"/>
</dbReference>
<dbReference type="PRINTS" id="PR00039">
    <property type="entry name" value="HTHLYSR"/>
</dbReference>
<dbReference type="SUPFAM" id="SSF53850">
    <property type="entry name" value="Periplasmic binding protein-like II"/>
    <property type="match status" value="1"/>
</dbReference>
<dbReference type="SUPFAM" id="SSF46785">
    <property type="entry name" value="Winged helix' DNA-binding domain"/>
    <property type="match status" value="1"/>
</dbReference>
<dbReference type="PROSITE" id="PS50931">
    <property type="entry name" value="HTH_LYSR"/>
    <property type="match status" value="1"/>
</dbReference>
<keyword id="KW-0010">Activator</keyword>
<keyword id="KW-0238">DNA-binding</keyword>
<keyword id="KW-0534">Nitrate assimilation</keyword>
<keyword id="KW-0678">Repressor</keyword>
<keyword id="KW-0804">Transcription</keyword>
<keyword id="KW-0805">Transcription regulation</keyword>
<organism>
    <name type="scientific">Klebsiella aerogenes</name>
    <name type="common">Enterobacter aerogenes</name>
    <dbReference type="NCBI Taxonomy" id="548"/>
    <lineage>
        <taxon>Bacteria</taxon>
        <taxon>Pseudomonadati</taxon>
        <taxon>Pseudomonadota</taxon>
        <taxon>Gammaproteobacteria</taxon>
        <taxon>Enterobacterales</taxon>
        <taxon>Enterobacteriaceae</taxon>
        <taxon>Klebsiella/Raoultella group</taxon>
        <taxon>Klebsiella</taxon>
    </lineage>
</organism>
<accession>Q08597</accession>
<proteinExistence type="inferred from homology"/>
<evidence type="ECO:0000255" key="1">
    <source>
        <dbReference type="PROSITE-ProRule" id="PRU00253"/>
    </source>
</evidence>
<evidence type="ECO:0000305" key="2"/>
<reference key="1">
    <citation type="journal article" date="1993" name="J. Bacteriol.">
        <title>The nac (nitrogen assimilation control) gene from Klebsiella aerogenes.</title>
        <authorList>
            <person name="Schwacha A."/>
            <person name="Bender R.A."/>
        </authorList>
    </citation>
    <scope>NUCLEOTIDE SEQUENCE [GENOMIC DNA]</scope>
    <source>
        <strain>W70 / KC1043</strain>
    </source>
</reference>
<protein>
    <recommendedName>
        <fullName>Nitrogen assimilation regulatory protein nac</fullName>
    </recommendedName>
    <alternativeName>
        <fullName>Nitrogen assimilation control protein</fullName>
    </alternativeName>
</protein>
<sequence length="305" mass="32754">MNLRRLKYFVKIVDIGSLTQAAEVLHIAQPALSQQVATLEGEMDQQLLIRTKRGVTPTEAGKILYTHARTILRQCEQAQLAVNNVGQTLRGQVSIGLAPGTAASAITMPLLQTVRNELPEVMVYLQESSGTALNDKLLAGQLDMAVLYERSPVAGIVSQPLLKEDLYLVGTRDCPGQSVDLTAVAEMNLFLPRDYSAVRARVTEAFTLRRLSAKIIGEIESITTLTAAIASGMGATVLPESAARSLCGAANGWMARISTPSMSLSLSLNMSARGSLSPQAQAVKEILLSLVSRPSLENRELQLVS</sequence>
<gene>
    <name type="primary">nac</name>
</gene>
<name>NAC_KLEAE</name>